<name>ERBB_ALV</name>
<organism>
    <name type="scientific">Avian leukosis virus</name>
    <name type="common">ALV</name>
    <dbReference type="NCBI Taxonomy" id="11864"/>
    <lineage>
        <taxon>Viruses</taxon>
        <taxon>Riboviria</taxon>
        <taxon>Pararnavirae</taxon>
        <taxon>Artverviricota</taxon>
        <taxon>Revtraviricetes</taxon>
        <taxon>Ortervirales</taxon>
        <taxon>Retroviridae</taxon>
        <taxon>Orthoretrovirinae</taxon>
        <taxon>Alpharetrovirus</taxon>
    </lineage>
</organism>
<accession>P00534</accession>
<evidence type="ECO:0000255" key="1">
    <source>
        <dbReference type="PROSITE-ProRule" id="PRU00159"/>
    </source>
</evidence>
<evidence type="ECO:0000255" key="2">
    <source>
        <dbReference type="PROSITE-ProRule" id="PRU10028"/>
    </source>
</evidence>
<evidence type="ECO:0000305" key="3"/>
<sequence length="634" mass="70891">MKCAHFIDGPHCVKACPAGVLGENDTLVWKYADANAVCQLCHPNCTRGCKGPGLEGCPNGSKTPSIAAGVVGGLLCLVVVGLGIGLYLRRRHIVRKRTLRRLLQERELVEPLTPSGEAPNQAHLRILKETEFKKVKVLGSGAFGTVYKGLWIPEGEKVKIPVAIKELREATSPKANKEILDEAYVMASVDNPHVCRLLGICLTSTVQLITQLMPYGCLLDYIREHKDNIGSQYLLNWCVQIAKGMNYLEERRLVHRDLAARNVLVKTPQHVKITDFGLAKLLGADEKEYHAEGGKVPIKWMALESILHRIYTHQSDVWSYGVTVWELMTFGSKPYDGIPASEISSVLEKGERLPQPPICTIDVYMIMVKCWMIDADSRPKFRELIAEFSKMARDPPRYLVIQGDERMHLPSPTDSKFYRTLMEEEDMEDIVDADEYLVPHQGFFNSPSTSRTPLLSSLSATSNNSATNCIDRNGQGHPVREDSFVQRYSSDPTGNFLEESIDDGFLPAPEYVNQLMPKKPSTAMVQNQIYNNISLTAISKLPMDSRYQNSHSTAVDNPEYLNTNQSPLAKTVFESSPYWIQSGNHQINLDNPDYQQDFLPNETKPNGLLKVPAAENPEYLRVAAPKSEYIEASA</sequence>
<comment type="catalytic activity">
    <reaction evidence="2">
        <text>L-tyrosyl-[protein] + ATP = O-phospho-L-tyrosyl-[protein] + ADP + H(+)</text>
        <dbReference type="Rhea" id="RHEA:10596"/>
        <dbReference type="Rhea" id="RHEA-COMP:10136"/>
        <dbReference type="Rhea" id="RHEA-COMP:20101"/>
        <dbReference type="ChEBI" id="CHEBI:15378"/>
        <dbReference type="ChEBI" id="CHEBI:30616"/>
        <dbReference type="ChEBI" id="CHEBI:46858"/>
        <dbReference type="ChEBI" id="CHEBI:61978"/>
        <dbReference type="ChEBI" id="CHEBI:456216"/>
        <dbReference type="EC" id="2.7.10.1"/>
    </reaction>
</comment>
<comment type="miscellaneous">
    <text>This protein is produced by erythroleukemia cells in chickens which have been injected with the avian leukosis virus and subsequently develop leukemia. The leukemias are induced by the insertion of retroviral promoter elements in or near the c-erbB gene, which leads to c-erbB activation.</text>
</comment>
<comment type="miscellaneous">
    <text>This protein is synthesized as a Gag-Env-ErbB protein.</text>
</comment>
<comment type="similarity">
    <text evidence="1">Belongs to the protein kinase superfamily. Tyr protein kinase family. EGF receptor subfamily.</text>
</comment>
<comment type="sequence caution" evidence="3">
    <conflict type="erroneous initiation">
        <sequence resource="EMBL-CDS" id="AAA48763"/>
    </conflict>
</comment>
<protein>
    <recommendedName>
        <fullName>Tyrosine-protein kinase transforming protein erbB</fullName>
        <ecNumber>2.7.10.1</ecNumber>
    </recommendedName>
</protein>
<dbReference type="EC" id="2.7.10.1"/>
<dbReference type="EMBL" id="M10066">
    <property type="protein sequence ID" value="AAA48763.1"/>
    <property type="status" value="ALT_INIT"/>
    <property type="molecule type" value="mRNA"/>
</dbReference>
<dbReference type="PIR" id="B00643">
    <property type="entry name" value="TVFVLV"/>
</dbReference>
<dbReference type="SMR" id="P00534"/>
<dbReference type="KEGG" id="gga:396494"/>
<dbReference type="BRENDA" id="2.7.10.1">
    <property type="organism ID" value="590"/>
</dbReference>
<dbReference type="GO" id="GO:0005886">
    <property type="term" value="C:plasma membrane"/>
    <property type="evidence" value="ECO:0007669"/>
    <property type="project" value="TreeGrafter"/>
</dbReference>
<dbReference type="GO" id="GO:0043235">
    <property type="term" value="C:receptor complex"/>
    <property type="evidence" value="ECO:0007669"/>
    <property type="project" value="TreeGrafter"/>
</dbReference>
<dbReference type="GO" id="GO:0005524">
    <property type="term" value="F:ATP binding"/>
    <property type="evidence" value="ECO:0007669"/>
    <property type="project" value="UniProtKB-KW"/>
</dbReference>
<dbReference type="GO" id="GO:0048408">
    <property type="term" value="F:epidermal growth factor binding"/>
    <property type="evidence" value="ECO:0007669"/>
    <property type="project" value="TreeGrafter"/>
</dbReference>
<dbReference type="GO" id="GO:0005006">
    <property type="term" value="F:epidermal growth factor receptor activity"/>
    <property type="evidence" value="ECO:0007669"/>
    <property type="project" value="TreeGrafter"/>
</dbReference>
<dbReference type="GO" id="GO:0043066">
    <property type="term" value="P:negative regulation of apoptotic process"/>
    <property type="evidence" value="ECO:0007669"/>
    <property type="project" value="TreeGrafter"/>
</dbReference>
<dbReference type="GO" id="GO:0050679">
    <property type="term" value="P:positive regulation of epithelial cell proliferation"/>
    <property type="evidence" value="ECO:0007669"/>
    <property type="project" value="TreeGrafter"/>
</dbReference>
<dbReference type="CDD" id="cd05108">
    <property type="entry name" value="PTKc_EGFR"/>
    <property type="match status" value="1"/>
</dbReference>
<dbReference type="CDD" id="cd12093">
    <property type="entry name" value="TM_ErbB1"/>
    <property type="match status" value="1"/>
</dbReference>
<dbReference type="FunFam" id="1.10.510.10:FF:000027">
    <property type="entry name" value="Receptor protein-tyrosine kinase"/>
    <property type="match status" value="1"/>
</dbReference>
<dbReference type="FunFam" id="2.10.220.10:FF:000008">
    <property type="entry name" value="Receptor protein-tyrosine kinase"/>
    <property type="match status" value="1"/>
</dbReference>
<dbReference type="FunFam" id="3.30.200.20:FF:000044">
    <property type="entry name" value="Receptor protein-tyrosine kinase"/>
    <property type="match status" value="1"/>
</dbReference>
<dbReference type="Gene3D" id="6.10.250.2930">
    <property type="match status" value="1"/>
</dbReference>
<dbReference type="Gene3D" id="2.10.220.10">
    <property type="entry name" value="Hormone Receptor, Insulin-like Growth Factor Receptor 1, Chain A, domain 2"/>
    <property type="match status" value="1"/>
</dbReference>
<dbReference type="Gene3D" id="3.30.200.20">
    <property type="entry name" value="Phosphorylase Kinase, domain 1"/>
    <property type="match status" value="1"/>
</dbReference>
<dbReference type="Gene3D" id="1.10.510.10">
    <property type="entry name" value="Transferase(Phosphotransferase) domain 1"/>
    <property type="match status" value="1"/>
</dbReference>
<dbReference type="InterPro" id="IPR044912">
    <property type="entry name" value="Egfr_JX_dom"/>
</dbReference>
<dbReference type="InterPro" id="IPR032778">
    <property type="entry name" value="GF_recep_IV"/>
</dbReference>
<dbReference type="InterPro" id="IPR009030">
    <property type="entry name" value="Growth_fac_rcpt_cys_sf"/>
</dbReference>
<dbReference type="InterPro" id="IPR011009">
    <property type="entry name" value="Kinase-like_dom_sf"/>
</dbReference>
<dbReference type="InterPro" id="IPR000719">
    <property type="entry name" value="Prot_kinase_dom"/>
</dbReference>
<dbReference type="InterPro" id="IPR017441">
    <property type="entry name" value="Protein_kinase_ATP_BS"/>
</dbReference>
<dbReference type="InterPro" id="IPR050122">
    <property type="entry name" value="RTK"/>
</dbReference>
<dbReference type="InterPro" id="IPR001245">
    <property type="entry name" value="Ser-Thr/Tyr_kinase_cat_dom"/>
</dbReference>
<dbReference type="InterPro" id="IPR049328">
    <property type="entry name" value="TM_ErbB1"/>
</dbReference>
<dbReference type="InterPro" id="IPR008266">
    <property type="entry name" value="Tyr_kinase_AS"/>
</dbReference>
<dbReference type="InterPro" id="IPR020635">
    <property type="entry name" value="Tyr_kinase_cat_dom"/>
</dbReference>
<dbReference type="PANTHER" id="PTHR24416:SF91">
    <property type="entry name" value="EPIDERMAL GROWTH FACTOR RECEPTOR"/>
    <property type="match status" value="1"/>
</dbReference>
<dbReference type="PANTHER" id="PTHR24416">
    <property type="entry name" value="TYROSINE-PROTEIN KINASE RECEPTOR"/>
    <property type="match status" value="1"/>
</dbReference>
<dbReference type="Pfam" id="PF14843">
    <property type="entry name" value="GF_recep_IV"/>
    <property type="match status" value="1"/>
</dbReference>
<dbReference type="Pfam" id="PF07714">
    <property type="entry name" value="PK_Tyr_Ser-Thr"/>
    <property type="match status" value="1"/>
</dbReference>
<dbReference type="Pfam" id="PF21314">
    <property type="entry name" value="TM_ErbB1"/>
    <property type="match status" value="1"/>
</dbReference>
<dbReference type="PRINTS" id="PR00109">
    <property type="entry name" value="TYRKINASE"/>
</dbReference>
<dbReference type="SMART" id="SM00219">
    <property type="entry name" value="TyrKc"/>
    <property type="match status" value="1"/>
</dbReference>
<dbReference type="SUPFAM" id="SSF57184">
    <property type="entry name" value="Growth factor receptor domain"/>
    <property type="match status" value="1"/>
</dbReference>
<dbReference type="SUPFAM" id="SSF56112">
    <property type="entry name" value="Protein kinase-like (PK-like)"/>
    <property type="match status" value="1"/>
</dbReference>
<dbReference type="PROSITE" id="PS00107">
    <property type="entry name" value="PROTEIN_KINASE_ATP"/>
    <property type="match status" value="1"/>
</dbReference>
<dbReference type="PROSITE" id="PS50011">
    <property type="entry name" value="PROTEIN_KINASE_DOM"/>
    <property type="match status" value="1"/>
</dbReference>
<dbReference type="PROSITE" id="PS00109">
    <property type="entry name" value="PROTEIN_KINASE_TYR"/>
    <property type="match status" value="1"/>
</dbReference>
<keyword id="KW-0067">ATP-binding</keyword>
<keyword id="KW-0418">Kinase</keyword>
<keyword id="KW-0547">Nucleotide-binding</keyword>
<keyword id="KW-0553">Oncogene</keyword>
<keyword id="KW-0597">Phosphoprotein</keyword>
<keyword id="KW-0808">Transferase</keyword>
<keyword id="KW-0829">Tyrosine-protein kinase</keyword>
<reference key="1">
    <citation type="journal article" date="1985" name="Cell">
        <title>c-erbB activation in ALV-induced erythroblastosis: novel RNA processing and promoter insertion result in expression of an amino-truncated EGF receptor.</title>
        <authorList>
            <person name="Nilsen T.W."/>
            <person name="Maroney P.A."/>
            <person name="Goodwin R.G."/>
            <person name="Rottman F.M."/>
            <person name="Crittenden L.B."/>
            <person name="Raines M.A."/>
            <person name="Kung H.-J."/>
        </authorList>
    </citation>
    <scope>NUCLEOTIDE SEQUENCE [MRNA]</scope>
</reference>
<proteinExistence type="evidence at transcript level"/>
<organismHost>
    <name type="scientific">Galliformes</name>
    <dbReference type="NCBI Taxonomy" id="8976"/>
</organismHost>
<feature type="chain" id="PRO_0000160251" description="Tyrosine-protein kinase transforming protein erbB">
    <location>
        <begin position="1"/>
        <end position="634"/>
    </location>
</feature>
<feature type="domain" description="Protein kinase" evidence="1">
    <location>
        <begin position="132"/>
        <end position="399"/>
    </location>
</feature>
<feature type="active site" description="Proton acceptor" evidence="1 2">
    <location>
        <position position="257"/>
    </location>
</feature>
<feature type="binding site" evidence="1">
    <location>
        <begin position="138"/>
        <end position="146"/>
    </location>
    <ligand>
        <name>ATP</name>
        <dbReference type="ChEBI" id="CHEBI:30616"/>
    </ligand>
</feature>
<feature type="binding site" evidence="1">
    <location>
        <position position="165"/>
    </location>
    <ligand>
        <name>ATP</name>
        <dbReference type="ChEBI" id="CHEBI:30616"/>
    </ligand>
</feature>
<gene>
    <name type="primary">V-ERBB</name>
</gene>